<proteinExistence type="inferred from homology"/>
<feature type="chain" id="PRO_1000129835" description="Phosphoenolpyruvate carboxylase">
    <location>
        <begin position="1"/>
        <end position="883"/>
    </location>
</feature>
<feature type="active site" evidence="1">
    <location>
        <position position="138"/>
    </location>
</feature>
<feature type="active site" evidence="1">
    <location>
        <position position="546"/>
    </location>
</feature>
<gene>
    <name evidence="1" type="primary">ppc</name>
    <name type="ordered locus">KPK_5436</name>
</gene>
<comment type="function">
    <text evidence="1">Forms oxaloacetate, a four-carbon dicarboxylic acid source for the tricarboxylic acid cycle.</text>
</comment>
<comment type="catalytic activity">
    <reaction evidence="1">
        <text>oxaloacetate + phosphate = phosphoenolpyruvate + hydrogencarbonate</text>
        <dbReference type="Rhea" id="RHEA:28370"/>
        <dbReference type="ChEBI" id="CHEBI:16452"/>
        <dbReference type="ChEBI" id="CHEBI:17544"/>
        <dbReference type="ChEBI" id="CHEBI:43474"/>
        <dbReference type="ChEBI" id="CHEBI:58702"/>
        <dbReference type="EC" id="4.1.1.31"/>
    </reaction>
</comment>
<comment type="cofactor">
    <cofactor evidence="1">
        <name>Mg(2+)</name>
        <dbReference type="ChEBI" id="CHEBI:18420"/>
    </cofactor>
</comment>
<comment type="similarity">
    <text evidence="1">Belongs to the PEPCase type 1 family.</text>
</comment>
<evidence type="ECO:0000255" key="1">
    <source>
        <dbReference type="HAMAP-Rule" id="MF_00595"/>
    </source>
</evidence>
<sequence>MNEQYSALRSNVSMLGKVLGDTIKDALGENILDRVETIRKLSKSSRAGNEANRQELLTTLQNLSNDELLPVARAFSQFLNLANTAEQYHSISPNGEAASNPEVIARTLRKLKDQPNLNEDTIKKAVESLSLELVLTAHPTEITRRTLIHKMVEVNSCLKQLDNKDIADYEHHQLMRRLRQLIAQSWHTDEIRKYRPSPVDEAKWGFAVVENSLWEGVPNYLRELNEQLEANLGYQLPVDFVPVRFTSWMGGDRDGNPNVTADITRHVLLLSRWKATDLFLKDVQVLISELSMVECTDELRALAGAEGAQEPYRYLMKKLRTQLMETQAWLEARLKGQKLPKPAGLITQNEQLWEPLYACYKSLQACGMGIIANGELLDTLRRVKSFGVPLVRIDIRQESTRHTEALGEMTRYLGIGDYESWSEADKQAFLIRELNSKRPLLPRQWEPSEETREVLDTCKVIAEAPRGSIAAYVISMAKTPSDVLAVHLLLKEAGIGFALPVAPLFETLDDLNNANDVMTQLLNIDWYRGFIQGKQMVMIGYSDSAKDAGVMAASWAQYQAQDALIKTCEKAGIELTLFHGRGGSIGRGGAPAHAALLSQPPGSLKGGLRVTEQGEMIRFKYGLPEVTISSLSLYTSAILEANLLPPPEPKAEWRDIMAELSDVSCKMYRGYVRENKDFVPYFRSATPEQELGKLPLGSRPAKRRPTGGVESLRAIPWIFAWTQNRLMLPAWLGAGAALQKVVEGGKQSELEAMCRDWPFFSTRLGMLEMVYSKADLWLAEYYDQRLVKPELWALGTELRKLLAADINVVLAIANDSHLMADLPWIAESIQLRNIYTDPLNVLQAELLHRSRQAEEAGKDPDPRVEQALMVTIAGVAAGMRNTG</sequence>
<protein>
    <recommendedName>
        <fullName evidence="1">Phosphoenolpyruvate carboxylase</fullName>
        <shortName evidence="1">PEPC</shortName>
        <shortName evidence="1">PEPCase</shortName>
        <ecNumber evidence="1">4.1.1.31</ecNumber>
    </recommendedName>
</protein>
<accession>B5XZ20</accession>
<reference key="1">
    <citation type="journal article" date="2008" name="PLoS Genet.">
        <title>Complete genome sequence of the N2-fixing broad host range endophyte Klebsiella pneumoniae 342 and virulence predictions verified in mice.</title>
        <authorList>
            <person name="Fouts D.E."/>
            <person name="Tyler H.L."/>
            <person name="DeBoy R.T."/>
            <person name="Daugherty S."/>
            <person name="Ren Q."/>
            <person name="Badger J.H."/>
            <person name="Durkin A.S."/>
            <person name="Huot H."/>
            <person name="Shrivastava S."/>
            <person name="Kothari S."/>
            <person name="Dodson R.J."/>
            <person name="Mohamoud Y."/>
            <person name="Khouri H."/>
            <person name="Roesch L.F.W."/>
            <person name="Krogfelt K.A."/>
            <person name="Struve C."/>
            <person name="Triplett E.W."/>
            <person name="Methe B.A."/>
        </authorList>
    </citation>
    <scope>NUCLEOTIDE SEQUENCE [LARGE SCALE GENOMIC DNA]</scope>
    <source>
        <strain>342</strain>
    </source>
</reference>
<name>CAPP_KLEP3</name>
<organism>
    <name type="scientific">Klebsiella pneumoniae (strain 342)</name>
    <dbReference type="NCBI Taxonomy" id="507522"/>
    <lineage>
        <taxon>Bacteria</taxon>
        <taxon>Pseudomonadati</taxon>
        <taxon>Pseudomonadota</taxon>
        <taxon>Gammaproteobacteria</taxon>
        <taxon>Enterobacterales</taxon>
        <taxon>Enterobacteriaceae</taxon>
        <taxon>Klebsiella/Raoultella group</taxon>
        <taxon>Klebsiella</taxon>
        <taxon>Klebsiella pneumoniae complex</taxon>
    </lineage>
</organism>
<dbReference type="EC" id="4.1.1.31" evidence="1"/>
<dbReference type="EMBL" id="CP000964">
    <property type="protein sequence ID" value="ACI08563.1"/>
    <property type="molecule type" value="Genomic_DNA"/>
</dbReference>
<dbReference type="SMR" id="B5XZ20"/>
<dbReference type="KEGG" id="kpe:KPK_5436"/>
<dbReference type="HOGENOM" id="CLU_006557_2_0_6"/>
<dbReference type="Proteomes" id="UP000001734">
    <property type="component" value="Chromosome"/>
</dbReference>
<dbReference type="GO" id="GO:0005829">
    <property type="term" value="C:cytosol"/>
    <property type="evidence" value="ECO:0007669"/>
    <property type="project" value="TreeGrafter"/>
</dbReference>
<dbReference type="GO" id="GO:0000287">
    <property type="term" value="F:magnesium ion binding"/>
    <property type="evidence" value="ECO:0007669"/>
    <property type="project" value="UniProtKB-UniRule"/>
</dbReference>
<dbReference type="GO" id="GO:0008964">
    <property type="term" value="F:phosphoenolpyruvate carboxylase activity"/>
    <property type="evidence" value="ECO:0007669"/>
    <property type="project" value="UniProtKB-UniRule"/>
</dbReference>
<dbReference type="GO" id="GO:0015977">
    <property type="term" value="P:carbon fixation"/>
    <property type="evidence" value="ECO:0007669"/>
    <property type="project" value="UniProtKB-UniRule"/>
</dbReference>
<dbReference type="GO" id="GO:0006107">
    <property type="term" value="P:oxaloacetate metabolic process"/>
    <property type="evidence" value="ECO:0007669"/>
    <property type="project" value="UniProtKB-UniRule"/>
</dbReference>
<dbReference type="GO" id="GO:0006099">
    <property type="term" value="P:tricarboxylic acid cycle"/>
    <property type="evidence" value="ECO:0007669"/>
    <property type="project" value="InterPro"/>
</dbReference>
<dbReference type="FunFam" id="1.20.1440.90:FF:000002">
    <property type="entry name" value="Phosphoenolpyruvate carboxylase"/>
    <property type="match status" value="1"/>
</dbReference>
<dbReference type="Gene3D" id="1.20.1440.90">
    <property type="entry name" value="Phosphoenolpyruvate/pyruvate domain"/>
    <property type="match status" value="1"/>
</dbReference>
<dbReference type="HAMAP" id="MF_00595">
    <property type="entry name" value="PEPcase_type1"/>
    <property type="match status" value="1"/>
</dbReference>
<dbReference type="InterPro" id="IPR021135">
    <property type="entry name" value="PEP_COase"/>
</dbReference>
<dbReference type="InterPro" id="IPR022805">
    <property type="entry name" value="PEP_COase_bac/pln-type"/>
</dbReference>
<dbReference type="InterPro" id="IPR018129">
    <property type="entry name" value="PEP_COase_Lys_AS"/>
</dbReference>
<dbReference type="InterPro" id="IPR033129">
    <property type="entry name" value="PEPCASE_His_AS"/>
</dbReference>
<dbReference type="InterPro" id="IPR015813">
    <property type="entry name" value="Pyrv/PenolPyrv_kinase-like_dom"/>
</dbReference>
<dbReference type="NCBIfam" id="NF000584">
    <property type="entry name" value="PRK00009.1"/>
    <property type="match status" value="1"/>
</dbReference>
<dbReference type="PANTHER" id="PTHR30523">
    <property type="entry name" value="PHOSPHOENOLPYRUVATE CARBOXYLASE"/>
    <property type="match status" value="1"/>
</dbReference>
<dbReference type="PANTHER" id="PTHR30523:SF6">
    <property type="entry name" value="PHOSPHOENOLPYRUVATE CARBOXYLASE"/>
    <property type="match status" value="1"/>
</dbReference>
<dbReference type="Pfam" id="PF00311">
    <property type="entry name" value="PEPcase"/>
    <property type="match status" value="1"/>
</dbReference>
<dbReference type="PRINTS" id="PR00150">
    <property type="entry name" value="PEPCARBXLASE"/>
</dbReference>
<dbReference type="SUPFAM" id="SSF51621">
    <property type="entry name" value="Phosphoenolpyruvate/pyruvate domain"/>
    <property type="match status" value="1"/>
</dbReference>
<dbReference type="PROSITE" id="PS00781">
    <property type="entry name" value="PEPCASE_1"/>
    <property type="match status" value="1"/>
</dbReference>
<dbReference type="PROSITE" id="PS00393">
    <property type="entry name" value="PEPCASE_2"/>
    <property type="match status" value="1"/>
</dbReference>
<keyword id="KW-0120">Carbon dioxide fixation</keyword>
<keyword id="KW-0456">Lyase</keyword>
<keyword id="KW-0460">Magnesium</keyword>